<dbReference type="EC" id="5.6.2.2" evidence="1"/>
<dbReference type="EMBL" id="X54631">
    <property type="protein sequence ID" value="CAA38447.1"/>
    <property type="molecule type" value="Genomic_DNA"/>
</dbReference>
<dbReference type="EMBL" id="D37926">
    <property type="protein sequence ID" value="BAA07144.1"/>
    <property type="molecule type" value="Genomic_DNA"/>
</dbReference>
<dbReference type="EMBL" id="D37927">
    <property type="protein sequence ID" value="BAA07145.1"/>
    <property type="molecule type" value="Genomic_DNA"/>
</dbReference>
<dbReference type="EMBL" id="X14792">
    <property type="protein sequence ID" value="CAA32897.1"/>
    <property type="molecule type" value="Genomic_DNA"/>
</dbReference>
<dbReference type="PIR" id="S12608">
    <property type="entry name" value="S12608"/>
</dbReference>
<dbReference type="RefSeq" id="WP_016497346.1">
    <property type="nucleotide sequence ID" value="NZ_WOWR01000057.1"/>
</dbReference>
<dbReference type="SMR" id="P13364"/>
<dbReference type="GeneID" id="45521529"/>
<dbReference type="eggNOG" id="COG0187">
    <property type="taxonomic scope" value="Bacteria"/>
</dbReference>
<dbReference type="OrthoDB" id="9802808at2"/>
<dbReference type="GO" id="GO:0005694">
    <property type="term" value="C:chromosome"/>
    <property type="evidence" value="ECO:0007669"/>
    <property type="project" value="InterPro"/>
</dbReference>
<dbReference type="GO" id="GO:0005737">
    <property type="term" value="C:cytoplasm"/>
    <property type="evidence" value="ECO:0007669"/>
    <property type="project" value="UniProtKB-SubCell"/>
</dbReference>
<dbReference type="GO" id="GO:0005524">
    <property type="term" value="F:ATP binding"/>
    <property type="evidence" value="ECO:0007669"/>
    <property type="project" value="UniProtKB-UniRule"/>
</dbReference>
<dbReference type="GO" id="GO:0003677">
    <property type="term" value="F:DNA binding"/>
    <property type="evidence" value="ECO:0007669"/>
    <property type="project" value="UniProtKB-KW"/>
</dbReference>
<dbReference type="GO" id="GO:0003918">
    <property type="term" value="F:DNA topoisomerase type II (double strand cut, ATP-hydrolyzing) activity"/>
    <property type="evidence" value="ECO:0007669"/>
    <property type="project" value="UniProtKB-UniRule"/>
</dbReference>
<dbReference type="GO" id="GO:0046872">
    <property type="term" value="F:metal ion binding"/>
    <property type="evidence" value="ECO:0007669"/>
    <property type="project" value="UniProtKB-KW"/>
</dbReference>
<dbReference type="GO" id="GO:0006265">
    <property type="term" value="P:DNA topological change"/>
    <property type="evidence" value="ECO:0007669"/>
    <property type="project" value="UniProtKB-UniRule"/>
</dbReference>
<dbReference type="GO" id="GO:0006261">
    <property type="term" value="P:DNA-templated DNA replication"/>
    <property type="evidence" value="ECO:0007669"/>
    <property type="project" value="UniProtKB-UniRule"/>
</dbReference>
<dbReference type="GO" id="GO:0046677">
    <property type="term" value="P:response to antibiotic"/>
    <property type="evidence" value="ECO:0007669"/>
    <property type="project" value="UniProtKB-KW"/>
</dbReference>
<dbReference type="CDD" id="cd16928">
    <property type="entry name" value="HATPase_GyrB-like"/>
    <property type="match status" value="1"/>
</dbReference>
<dbReference type="CDD" id="cd00822">
    <property type="entry name" value="TopoII_Trans_DNA_gyrase"/>
    <property type="match status" value="1"/>
</dbReference>
<dbReference type="CDD" id="cd03366">
    <property type="entry name" value="TOPRIM_TopoIIA_GyrB"/>
    <property type="match status" value="1"/>
</dbReference>
<dbReference type="FunFam" id="3.30.230.10:FF:000005">
    <property type="entry name" value="DNA gyrase subunit B"/>
    <property type="match status" value="1"/>
</dbReference>
<dbReference type="FunFam" id="3.30.565.10:FF:000002">
    <property type="entry name" value="DNA gyrase subunit B"/>
    <property type="match status" value="1"/>
</dbReference>
<dbReference type="FunFam" id="3.40.50.670:FF:000004">
    <property type="entry name" value="DNA gyrase subunit B"/>
    <property type="match status" value="1"/>
</dbReference>
<dbReference type="FunFam" id="3.40.50.670:FF:000005">
    <property type="entry name" value="DNA gyrase subunit B"/>
    <property type="match status" value="1"/>
</dbReference>
<dbReference type="Gene3D" id="3.10.20.690">
    <property type="match status" value="1"/>
</dbReference>
<dbReference type="Gene3D" id="3.30.230.10">
    <property type="match status" value="1"/>
</dbReference>
<dbReference type="Gene3D" id="3.40.50.670">
    <property type="match status" value="2"/>
</dbReference>
<dbReference type="Gene3D" id="3.30.565.10">
    <property type="entry name" value="Histidine kinase-like ATPase, C-terminal domain"/>
    <property type="match status" value="1"/>
</dbReference>
<dbReference type="HAMAP" id="MF_01898">
    <property type="entry name" value="GyrB"/>
    <property type="match status" value="1"/>
</dbReference>
<dbReference type="InterPro" id="IPR002288">
    <property type="entry name" value="DNA_gyrase_B_C"/>
</dbReference>
<dbReference type="InterPro" id="IPR011557">
    <property type="entry name" value="GyrB"/>
</dbReference>
<dbReference type="InterPro" id="IPR049353">
    <property type="entry name" value="GyrB_hook"/>
</dbReference>
<dbReference type="InterPro" id="IPR041423">
    <property type="entry name" value="GyrB_insert"/>
</dbReference>
<dbReference type="InterPro" id="IPR036890">
    <property type="entry name" value="HATPase_C_sf"/>
</dbReference>
<dbReference type="InterPro" id="IPR020568">
    <property type="entry name" value="Ribosomal_Su5_D2-typ_SF"/>
</dbReference>
<dbReference type="InterPro" id="IPR014721">
    <property type="entry name" value="Ribsml_uS5_D2-typ_fold_subgr"/>
</dbReference>
<dbReference type="InterPro" id="IPR001241">
    <property type="entry name" value="Topo_IIA"/>
</dbReference>
<dbReference type="InterPro" id="IPR013760">
    <property type="entry name" value="Topo_IIA-like_dom_sf"/>
</dbReference>
<dbReference type="InterPro" id="IPR000565">
    <property type="entry name" value="Topo_IIA_B"/>
</dbReference>
<dbReference type="InterPro" id="IPR013759">
    <property type="entry name" value="Topo_IIA_B_C"/>
</dbReference>
<dbReference type="InterPro" id="IPR013506">
    <property type="entry name" value="Topo_IIA_bsu_dom2"/>
</dbReference>
<dbReference type="InterPro" id="IPR018522">
    <property type="entry name" value="TopoIIA_CS"/>
</dbReference>
<dbReference type="InterPro" id="IPR006171">
    <property type="entry name" value="TOPRIM_dom"/>
</dbReference>
<dbReference type="InterPro" id="IPR034160">
    <property type="entry name" value="TOPRIM_GyrB"/>
</dbReference>
<dbReference type="NCBIfam" id="TIGR01059">
    <property type="entry name" value="gyrB"/>
    <property type="match status" value="1"/>
</dbReference>
<dbReference type="NCBIfam" id="NF004189">
    <property type="entry name" value="PRK05644.1"/>
    <property type="match status" value="1"/>
</dbReference>
<dbReference type="NCBIfam" id="NF011501">
    <property type="entry name" value="PRK14939.1"/>
    <property type="match status" value="1"/>
</dbReference>
<dbReference type="PANTHER" id="PTHR45866:SF1">
    <property type="entry name" value="DNA GYRASE SUBUNIT B, MITOCHONDRIAL"/>
    <property type="match status" value="1"/>
</dbReference>
<dbReference type="PANTHER" id="PTHR45866">
    <property type="entry name" value="DNA GYRASE/TOPOISOMERASE SUBUNIT B"/>
    <property type="match status" value="1"/>
</dbReference>
<dbReference type="Pfam" id="PF00204">
    <property type="entry name" value="DNA_gyraseB"/>
    <property type="match status" value="1"/>
</dbReference>
<dbReference type="Pfam" id="PF00986">
    <property type="entry name" value="DNA_gyraseB_C"/>
    <property type="match status" value="1"/>
</dbReference>
<dbReference type="Pfam" id="PF21249">
    <property type="entry name" value="GyrB_hook"/>
    <property type="match status" value="1"/>
</dbReference>
<dbReference type="Pfam" id="PF18053">
    <property type="entry name" value="GyrB_insert"/>
    <property type="match status" value="1"/>
</dbReference>
<dbReference type="Pfam" id="PF02518">
    <property type="entry name" value="HATPase_c"/>
    <property type="match status" value="1"/>
</dbReference>
<dbReference type="Pfam" id="PF01751">
    <property type="entry name" value="Toprim"/>
    <property type="match status" value="1"/>
</dbReference>
<dbReference type="PRINTS" id="PR01159">
    <property type="entry name" value="DNAGYRASEB"/>
</dbReference>
<dbReference type="PRINTS" id="PR00418">
    <property type="entry name" value="TPI2FAMILY"/>
</dbReference>
<dbReference type="SMART" id="SM00387">
    <property type="entry name" value="HATPase_c"/>
    <property type="match status" value="1"/>
</dbReference>
<dbReference type="SMART" id="SM00433">
    <property type="entry name" value="TOP2c"/>
    <property type="match status" value="1"/>
</dbReference>
<dbReference type="SUPFAM" id="SSF55874">
    <property type="entry name" value="ATPase domain of HSP90 chaperone/DNA topoisomerase II/histidine kinase"/>
    <property type="match status" value="1"/>
</dbReference>
<dbReference type="SUPFAM" id="SSF54211">
    <property type="entry name" value="Ribosomal protein S5 domain 2-like"/>
    <property type="match status" value="1"/>
</dbReference>
<dbReference type="SUPFAM" id="SSF56719">
    <property type="entry name" value="Type II DNA topoisomerase"/>
    <property type="match status" value="1"/>
</dbReference>
<dbReference type="PROSITE" id="PS00177">
    <property type="entry name" value="TOPOISOMERASE_II"/>
    <property type="match status" value="1"/>
</dbReference>
<dbReference type="PROSITE" id="PS50880">
    <property type="entry name" value="TOPRIM"/>
    <property type="match status" value="1"/>
</dbReference>
<gene>
    <name evidence="1" type="primary">gyrB</name>
</gene>
<proteinExistence type="inferred from homology"/>
<comment type="function">
    <text evidence="1">A type II topoisomerase that negatively supercoils closed circular double-stranded (ds) DNA in an ATP-dependent manner to modulate DNA topology and maintain chromosomes in an underwound state. Negative supercoiling favors strand separation, and DNA replication, transcription, recombination and repair, all of which involve strand separation. Also able to catalyze the interconversion of other topological isomers of dsDNA rings, including catenanes and knotted rings. Type II topoisomerases break and join 2 DNA strands simultaneously in an ATP-dependent manner.</text>
</comment>
<comment type="catalytic activity">
    <reaction evidence="1">
        <text>ATP-dependent breakage, passage and rejoining of double-stranded DNA.</text>
        <dbReference type="EC" id="5.6.2.2"/>
    </reaction>
</comment>
<comment type="cofactor">
    <cofactor evidence="1">
        <name>Mg(2+)</name>
        <dbReference type="ChEBI" id="CHEBI:18420"/>
    </cofactor>
    <cofactor evidence="1">
        <name>Mn(2+)</name>
        <dbReference type="ChEBI" id="CHEBI:29035"/>
    </cofactor>
    <cofactor evidence="1">
        <name>Ca(2+)</name>
        <dbReference type="ChEBI" id="CHEBI:29108"/>
    </cofactor>
    <text evidence="1">Binds two Mg(2+) per subunit. The magnesium ions form salt bridges with both the protein and the DNA. Can also accept other divalent metal cations, such as Mn(2+) or Ca(2+).</text>
</comment>
<comment type="subunit">
    <text evidence="1">Heterotetramer, composed of two GyrA and two GyrB chains. In the heterotetramer, GyrA contains the active site tyrosine that forms a transient covalent intermediate with DNA, while GyrB binds cofactors and catalyzes ATP hydrolysis.</text>
</comment>
<comment type="subcellular location">
    <subcellularLocation>
        <location evidence="1">Cytoplasm</location>
    </subcellularLocation>
</comment>
<comment type="miscellaneous">
    <text evidence="1">Few gyrases are as efficient as E.coli at forming negative supercoils. Not all organisms have 2 type II topoisomerases; in organisms with a single type II topoisomerase this enzyme also has to decatenate newly replicated chromosomes.</text>
</comment>
<comment type="similarity">
    <text evidence="1">Belongs to the type II topoisomerase GyrB family.</text>
</comment>
<protein>
    <recommendedName>
        <fullName evidence="1">DNA gyrase subunit B</fullName>
        <ecNumber evidence="1">5.6.2.2</ecNumber>
    </recommendedName>
</protein>
<evidence type="ECO:0000255" key="1">
    <source>
        <dbReference type="HAMAP-Rule" id="MF_01898"/>
    </source>
</evidence>
<feature type="chain" id="PRO_0000145329" description="DNA gyrase subunit B">
    <location>
        <begin position="1"/>
        <end position="806"/>
    </location>
</feature>
<feature type="domain" description="Toprim" evidence="1">
    <location>
        <begin position="420"/>
        <end position="535"/>
    </location>
</feature>
<feature type="binding site" evidence="1">
    <location>
        <position position="426"/>
    </location>
    <ligand>
        <name>Mg(2+)</name>
        <dbReference type="ChEBI" id="CHEBI:18420"/>
        <label>1</label>
        <note>catalytic</note>
    </ligand>
</feature>
<feature type="binding site" evidence="1">
    <location>
        <position position="500"/>
    </location>
    <ligand>
        <name>Mg(2+)</name>
        <dbReference type="ChEBI" id="CHEBI:18420"/>
        <label>1</label>
        <note>catalytic</note>
    </ligand>
</feature>
<feature type="binding site" evidence="1">
    <location>
        <position position="500"/>
    </location>
    <ligand>
        <name>Mg(2+)</name>
        <dbReference type="ChEBI" id="CHEBI:18420"/>
        <label>2</label>
    </ligand>
</feature>
<feature type="binding site" evidence="1">
    <location>
        <position position="502"/>
    </location>
    <ligand>
        <name>Mg(2+)</name>
        <dbReference type="ChEBI" id="CHEBI:18420"/>
        <label>2</label>
    </ligand>
</feature>
<feature type="site" description="Interaction with DNA" evidence="1">
    <location>
        <position position="451"/>
    </location>
</feature>
<feature type="site" description="Interaction with DNA" evidence="1">
    <location>
        <position position="454"/>
    </location>
</feature>
<feature type="sequence variant" description="In strain: JCM 6156 and PB4.">
    <original>E</original>
    <variation>D</variation>
    <location>
        <position position="161"/>
    </location>
</feature>
<feature type="sequence variant" description="In strain: JCM 6156 and PB4.">
    <original>S</original>
    <variation>N</variation>
    <location>
        <position position="245"/>
    </location>
</feature>
<feature type="sequence variant" description="In strain: JCM 6156.">
    <original>E</original>
    <variation>D</variation>
    <location>
        <position position="249"/>
    </location>
</feature>
<feature type="sequence variant" description="In strain: PB4.">
    <original>S</original>
    <variation>N</variation>
    <location>
        <position position="297"/>
    </location>
</feature>
<feature type="sequence variant" description="In strain: PB4.">
    <original>Y</original>
    <variation>F</variation>
    <location>
        <position position="358"/>
    </location>
</feature>
<feature type="sequence variant" description="In strain: JCM 6156 and PB4.">
    <original>S</original>
    <variation>A</variation>
    <location>
        <position position="360"/>
    </location>
</feature>
<name>GYRB_PSEPU</name>
<accession>P13364</accession>
<sequence>MSENQTYDSSSIKVLKGLDAVRKRPGMYIGDTDDGSGLHHMVFEVVDNSIDEALAGHCDDITVIIHTDESISVRDNGRGIPVDVHKEEGVSAAEVIMTVLHAGGKFDDNSYKVSGGLHGVGVSVVNALSEKLVLTVRRSGKIWEQTYVHGVPQAPMAVVGESETTGTHIHFKPSAETFKNIHFSWDILAKRIRELSFLNSGVGILLKDERSGKEEFFKYEGGLRAFVEYLNTNKTPVNSQVFHFSVQREDGVGVEVALQWNDSFNENLLCFTNNIPQRDGGTHLVGFRSSLTRSLNSYIEQEGLAKKNKVATTGDDAREGLTAIISVKVPDPKFSSQTKDKLVSSEVKTAVEQEMNKYFSDFLLENPNEAKAVVGKMIDAARAREAARKAREMTRRKGALDIAGLPGKLADCQEKDPALSELYLVEGDSAGGSAKQGRNRRTQAILPLKGKILNVEKARFDKMISSQEVGTLITALGCGIGREEYNIDKLRYHNIIIMTDADVDGSHIRTLLLTFFFRQLPELVERGYIYIAQPPLYKVKKGKQEQYIKDDEAMEEYMTQSALEDASLHLDESAPAVSGVQLESLVNEFRSVMKTLKRLSRLYPEELTEHFVYLPEVTLEQLGDHAVMQAWLAKLQERLNSSQKSGLAYNASLREDKERNVWLPEVEITSHGLASYITFNRDFFGSNDYRTVVNIGAKLSSLLGEGAYVQRGERRKAIVEFKEGLDWLMNETTKRHTIQRYKGLGEMNPDQLWETTMDPTVRRMLKVTIEDAIAADQIFNTLMGDAVEPRREFIESNALSVSNLDF</sequence>
<keyword id="KW-0046">Antibiotic resistance</keyword>
<keyword id="KW-0067">ATP-binding</keyword>
<keyword id="KW-0963">Cytoplasm</keyword>
<keyword id="KW-0238">DNA-binding</keyword>
<keyword id="KW-0413">Isomerase</keyword>
<keyword id="KW-0460">Magnesium</keyword>
<keyword id="KW-0479">Metal-binding</keyword>
<keyword id="KW-0547">Nucleotide-binding</keyword>
<keyword id="KW-0799">Topoisomerase</keyword>
<reference key="1">
    <citation type="journal article" date="1990" name="Nucleic Acids Res.">
        <title>Nucleotide sequence of the gyrB gene of Pseudomonas putida.</title>
        <authorList>
            <person name="Parales R.E."/>
            <person name="Harwood C.S."/>
        </authorList>
    </citation>
    <scope>NUCLEOTIDE SEQUENCE [GENOMIC DNA]</scope>
    <source>
        <strain>PRS2000</strain>
    </source>
</reference>
<reference key="2">
    <citation type="journal article" date="1995" name="Appl. Environ. Microbiol.">
        <title>PCR amplification and direct sequencing of gyrB genes with universal primers and their application to the detection and taxonomic analysis of Pseudomonas putida strains.</title>
        <authorList>
            <person name="Yamamoto S."/>
            <person name="Harayama S."/>
        </authorList>
    </citation>
    <scope>NUCLEOTIDE SEQUENCE [GENOMIC DNA] OF 128-496</scope>
    <source>
        <strain>ATCC 33015 / JCM 6156</strain>
        <strain>PB4</strain>
    </source>
</reference>
<reference key="3">
    <citation type="journal article" date="1989" name="Mol. Gen. Genet.">
        <title>Structure of the dnaA region of Pseudomonas putida: conservation among three bacteria, Bacillus subtilis, Escherichia coli and P. putida.</title>
        <authorList>
            <person name="Fujita M.Q."/>
            <person name="Yoshikawa H."/>
            <person name="Ogasawara N."/>
        </authorList>
    </citation>
    <scope>NUCLEOTIDE SEQUENCE [GENOMIC DNA] OF 1-47</scope>
    <source>
        <strain>TN2100</strain>
    </source>
</reference>
<organism>
    <name type="scientific">Pseudomonas putida</name>
    <name type="common">Arthrobacter siderocapsulatus</name>
    <dbReference type="NCBI Taxonomy" id="303"/>
    <lineage>
        <taxon>Bacteria</taxon>
        <taxon>Pseudomonadati</taxon>
        <taxon>Pseudomonadota</taxon>
        <taxon>Gammaproteobacteria</taxon>
        <taxon>Pseudomonadales</taxon>
        <taxon>Pseudomonadaceae</taxon>
        <taxon>Pseudomonas</taxon>
    </lineage>
</organism>